<accession>B5QWQ6</accession>
<name>XNI_SALEP</name>
<protein>
    <recommendedName>
        <fullName evidence="1">Flap endonuclease Xni</fullName>
        <shortName evidence="1">FEN</shortName>
        <ecNumber evidence="1">3.1.-.-</ecNumber>
    </recommendedName>
</protein>
<comment type="function">
    <text evidence="1">Has flap endonuclease activity. During DNA replication, flap endonucleases cleave the 5'-overhanging flap structure that is generated by displacement synthesis when DNA polymerase encounters the 5'-end of a downstream Okazaki fragment.</text>
</comment>
<comment type="cofactor">
    <cofactor evidence="1">
        <name>Mg(2+)</name>
        <dbReference type="ChEBI" id="CHEBI:18420"/>
    </cofactor>
    <text evidence="1">Binds 2 Mg(2+) per subunit. Only one magnesium ion has a direct interaction with the protein, the other interactions are indirect.</text>
</comment>
<comment type="cofactor">
    <cofactor evidence="1">
        <name>K(+)</name>
        <dbReference type="ChEBI" id="CHEBI:29103"/>
    </cofactor>
    <text evidence="1">Binds 1 K(+) per subunit. The potassium ion strongly increases the affinity for DNA.</text>
</comment>
<comment type="similarity">
    <text evidence="1">Belongs to the Xni family.</text>
</comment>
<comment type="sequence caution" evidence="2">
    <conflict type="erroneous initiation">
        <sequence resource="EMBL-CDS" id="CAR34395"/>
    </conflict>
    <text>Extended N-terminus.</text>
</comment>
<proteinExistence type="inferred from homology"/>
<evidence type="ECO:0000255" key="1">
    <source>
        <dbReference type="HAMAP-Rule" id="MF_01192"/>
    </source>
</evidence>
<evidence type="ECO:0000305" key="2"/>
<dbReference type="EC" id="3.1.-.-" evidence="1"/>
<dbReference type="EMBL" id="AM933172">
    <property type="protein sequence ID" value="CAR34395.1"/>
    <property type="status" value="ALT_INIT"/>
    <property type="molecule type" value="Genomic_DNA"/>
</dbReference>
<dbReference type="RefSeq" id="WP_001574919.1">
    <property type="nucleotide sequence ID" value="NC_011294.1"/>
</dbReference>
<dbReference type="SMR" id="B5QWQ6"/>
<dbReference type="KEGG" id="set:SEN2817"/>
<dbReference type="HOGENOM" id="CLU_004675_1_2_6"/>
<dbReference type="Proteomes" id="UP000000613">
    <property type="component" value="Chromosome"/>
</dbReference>
<dbReference type="GO" id="GO:0008409">
    <property type="term" value="F:5'-3' exonuclease activity"/>
    <property type="evidence" value="ECO:0007669"/>
    <property type="project" value="InterPro"/>
</dbReference>
<dbReference type="GO" id="GO:0017108">
    <property type="term" value="F:5'-flap endonuclease activity"/>
    <property type="evidence" value="ECO:0007669"/>
    <property type="project" value="UniProtKB-UniRule"/>
</dbReference>
<dbReference type="GO" id="GO:0003677">
    <property type="term" value="F:DNA binding"/>
    <property type="evidence" value="ECO:0007669"/>
    <property type="project" value="UniProtKB-UniRule"/>
</dbReference>
<dbReference type="GO" id="GO:0000287">
    <property type="term" value="F:magnesium ion binding"/>
    <property type="evidence" value="ECO:0007669"/>
    <property type="project" value="UniProtKB-UniRule"/>
</dbReference>
<dbReference type="GO" id="GO:0030955">
    <property type="term" value="F:potassium ion binding"/>
    <property type="evidence" value="ECO:0007669"/>
    <property type="project" value="UniProtKB-UniRule"/>
</dbReference>
<dbReference type="GO" id="GO:0033567">
    <property type="term" value="P:DNA replication, Okazaki fragment processing"/>
    <property type="evidence" value="ECO:0007669"/>
    <property type="project" value="UniProtKB-UniRule"/>
</dbReference>
<dbReference type="CDD" id="cd09898">
    <property type="entry name" value="H3TH_53EXO"/>
    <property type="match status" value="1"/>
</dbReference>
<dbReference type="CDD" id="cd09859">
    <property type="entry name" value="PIN_53EXO"/>
    <property type="match status" value="1"/>
</dbReference>
<dbReference type="FunFam" id="1.10.150.20:FF:000003">
    <property type="entry name" value="DNA polymerase I"/>
    <property type="match status" value="1"/>
</dbReference>
<dbReference type="FunFam" id="3.40.50.1010:FF:000011">
    <property type="entry name" value="Flap endonuclease Xni"/>
    <property type="match status" value="1"/>
</dbReference>
<dbReference type="Gene3D" id="1.10.150.20">
    <property type="entry name" value="5' to 3' exonuclease, C-terminal subdomain"/>
    <property type="match status" value="1"/>
</dbReference>
<dbReference type="Gene3D" id="3.40.50.1010">
    <property type="entry name" value="5'-nuclease"/>
    <property type="match status" value="1"/>
</dbReference>
<dbReference type="HAMAP" id="MF_01192">
    <property type="entry name" value="Xni"/>
    <property type="match status" value="1"/>
</dbReference>
<dbReference type="InterPro" id="IPR020046">
    <property type="entry name" value="5-3_exonucl_a-hlix_arch_N"/>
</dbReference>
<dbReference type="InterPro" id="IPR002421">
    <property type="entry name" value="5-3_exonuclease"/>
</dbReference>
<dbReference type="InterPro" id="IPR036279">
    <property type="entry name" value="5-3_exonuclease_C_sf"/>
</dbReference>
<dbReference type="InterPro" id="IPR020045">
    <property type="entry name" value="DNA_polI_H3TH"/>
</dbReference>
<dbReference type="InterPro" id="IPR038969">
    <property type="entry name" value="FEN"/>
</dbReference>
<dbReference type="InterPro" id="IPR008918">
    <property type="entry name" value="HhH2"/>
</dbReference>
<dbReference type="InterPro" id="IPR029060">
    <property type="entry name" value="PIN-like_dom_sf"/>
</dbReference>
<dbReference type="InterPro" id="IPR022895">
    <property type="entry name" value="Xni"/>
</dbReference>
<dbReference type="NCBIfam" id="NF007017">
    <property type="entry name" value="PRK09482.1"/>
    <property type="match status" value="1"/>
</dbReference>
<dbReference type="PANTHER" id="PTHR42646:SF2">
    <property type="entry name" value="5'-3' EXONUCLEASE FAMILY PROTEIN"/>
    <property type="match status" value="1"/>
</dbReference>
<dbReference type="PANTHER" id="PTHR42646">
    <property type="entry name" value="FLAP ENDONUCLEASE XNI"/>
    <property type="match status" value="1"/>
</dbReference>
<dbReference type="Pfam" id="PF01367">
    <property type="entry name" value="5_3_exonuc"/>
    <property type="match status" value="1"/>
</dbReference>
<dbReference type="Pfam" id="PF02739">
    <property type="entry name" value="5_3_exonuc_N"/>
    <property type="match status" value="1"/>
</dbReference>
<dbReference type="SMART" id="SM00475">
    <property type="entry name" value="53EXOc"/>
    <property type="match status" value="1"/>
</dbReference>
<dbReference type="SMART" id="SM00279">
    <property type="entry name" value="HhH2"/>
    <property type="match status" value="1"/>
</dbReference>
<dbReference type="SUPFAM" id="SSF47807">
    <property type="entry name" value="5' to 3' exonuclease, C-terminal subdomain"/>
    <property type="match status" value="1"/>
</dbReference>
<dbReference type="SUPFAM" id="SSF88723">
    <property type="entry name" value="PIN domain-like"/>
    <property type="match status" value="1"/>
</dbReference>
<organism>
    <name type="scientific">Salmonella enteritidis PT4 (strain P125109)</name>
    <dbReference type="NCBI Taxonomy" id="550537"/>
    <lineage>
        <taxon>Bacteria</taxon>
        <taxon>Pseudomonadati</taxon>
        <taxon>Pseudomonadota</taxon>
        <taxon>Gammaproteobacteria</taxon>
        <taxon>Enterobacterales</taxon>
        <taxon>Enterobacteriaceae</taxon>
        <taxon>Salmonella</taxon>
    </lineage>
</organism>
<reference key="1">
    <citation type="journal article" date="2008" name="Genome Res.">
        <title>Comparative genome analysis of Salmonella enteritidis PT4 and Salmonella gallinarum 287/91 provides insights into evolutionary and host adaptation pathways.</title>
        <authorList>
            <person name="Thomson N.R."/>
            <person name="Clayton D.J."/>
            <person name="Windhorst D."/>
            <person name="Vernikos G."/>
            <person name="Davidson S."/>
            <person name="Churcher C."/>
            <person name="Quail M.A."/>
            <person name="Stevens M."/>
            <person name="Jones M.A."/>
            <person name="Watson M."/>
            <person name="Barron A."/>
            <person name="Layton A."/>
            <person name="Pickard D."/>
            <person name="Kingsley R.A."/>
            <person name="Bignell A."/>
            <person name="Clark L."/>
            <person name="Harris B."/>
            <person name="Ormond D."/>
            <person name="Abdellah Z."/>
            <person name="Brooks K."/>
            <person name="Cherevach I."/>
            <person name="Chillingworth T."/>
            <person name="Woodward J."/>
            <person name="Norberczak H."/>
            <person name="Lord A."/>
            <person name="Arrowsmith C."/>
            <person name="Jagels K."/>
            <person name="Moule S."/>
            <person name="Mungall K."/>
            <person name="Saunders M."/>
            <person name="Whitehead S."/>
            <person name="Chabalgoity J.A."/>
            <person name="Maskell D."/>
            <person name="Humphreys T."/>
            <person name="Roberts M."/>
            <person name="Barrow P.A."/>
            <person name="Dougan G."/>
            <person name="Parkhill J."/>
        </authorList>
    </citation>
    <scope>NUCLEOTIDE SEQUENCE [LARGE SCALE GENOMIC DNA]</scope>
    <source>
        <strain>P125109</strain>
    </source>
</reference>
<gene>
    <name evidence="1" type="primary">xni</name>
    <name evidence="1" type="synonym">ygdG</name>
    <name type="ordered locus">SEN2817</name>
</gene>
<keyword id="KW-0238">DNA-binding</keyword>
<keyword id="KW-0255">Endonuclease</keyword>
<keyword id="KW-0378">Hydrolase</keyword>
<keyword id="KW-0460">Magnesium</keyword>
<keyword id="KW-0479">Metal-binding</keyword>
<keyword id="KW-0540">Nuclease</keyword>
<keyword id="KW-0630">Potassium</keyword>
<feature type="chain" id="PRO_1000138388" description="Flap endonuclease Xni">
    <location>
        <begin position="1"/>
        <end position="251"/>
    </location>
</feature>
<feature type="domain" description="5'-3' exonuclease" evidence="1">
    <location>
        <begin position="160"/>
        <end position="249"/>
    </location>
</feature>
<feature type="region of interest" description="Interaction with DNA" evidence="1">
    <location>
        <begin position="184"/>
        <end position="189"/>
    </location>
</feature>
<feature type="binding site" evidence="1">
    <location>
        <position position="104"/>
    </location>
    <ligand>
        <name>Mg(2+)</name>
        <dbReference type="ChEBI" id="CHEBI:18420"/>
    </ligand>
</feature>
<feature type="binding site" evidence="1">
    <location>
        <position position="171"/>
    </location>
    <ligand>
        <name>K(+)</name>
        <dbReference type="ChEBI" id="CHEBI:29103"/>
    </ligand>
</feature>
<feature type="binding site" evidence="1">
    <location>
        <position position="172"/>
    </location>
    <ligand>
        <name>K(+)</name>
        <dbReference type="ChEBI" id="CHEBI:29103"/>
    </ligand>
</feature>
<feature type="binding site" evidence="1">
    <location>
        <position position="180"/>
    </location>
    <ligand>
        <name>K(+)</name>
        <dbReference type="ChEBI" id="CHEBI:29103"/>
    </ligand>
</feature>
<feature type="binding site" evidence="1">
    <location>
        <position position="182"/>
    </location>
    <ligand>
        <name>K(+)</name>
        <dbReference type="ChEBI" id="CHEBI:29103"/>
    </ligand>
</feature>
<feature type="binding site" evidence="1">
    <location>
        <position position="185"/>
    </location>
    <ligand>
        <name>K(+)</name>
        <dbReference type="ChEBI" id="CHEBI:29103"/>
    </ligand>
</feature>
<sequence>MAAHLLIVDALNLIRRIHAVQGSPCVETCQHALDQLIIHSQPTHAVAVFDDDARSSGWRHQRLPDYKAGRPPMPDDLHNEMPALRAAFEQRGIRCWASDGNEADDLAATLALKVTEAGHQATIVSTDKGYCQLLSPGLRIRDYFQKRWLDAPFIEKEFGVLPRQLPDYWGLAGISSSKVPGVAGIGPKSATQLLIQFQNLEGIYAHLDEVPEKWRKKLETHKEMAFLCRDIARLQTDLHIDGNLQQLRLAR</sequence>